<name>SYE_PARPJ</name>
<dbReference type="EC" id="6.1.1.17" evidence="1"/>
<dbReference type="EMBL" id="CP001052">
    <property type="protein sequence ID" value="ACD16891.1"/>
    <property type="molecule type" value="Genomic_DNA"/>
</dbReference>
<dbReference type="RefSeq" id="WP_012433488.1">
    <property type="nucleotide sequence ID" value="NC_010681.1"/>
</dbReference>
<dbReference type="SMR" id="B2SXN5"/>
<dbReference type="STRING" id="398527.Bphyt_2495"/>
<dbReference type="KEGG" id="bpy:Bphyt_2495"/>
<dbReference type="eggNOG" id="COG0008">
    <property type="taxonomic scope" value="Bacteria"/>
</dbReference>
<dbReference type="HOGENOM" id="CLU_015768_6_0_4"/>
<dbReference type="OrthoDB" id="9807503at2"/>
<dbReference type="Proteomes" id="UP000001739">
    <property type="component" value="Chromosome 1"/>
</dbReference>
<dbReference type="GO" id="GO:0005829">
    <property type="term" value="C:cytosol"/>
    <property type="evidence" value="ECO:0007669"/>
    <property type="project" value="TreeGrafter"/>
</dbReference>
<dbReference type="GO" id="GO:0005524">
    <property type="term" value="F:ATP binding"/>
    <property type="evidence" value="ECO:0007669"/>
    <property type="project" value="UniProtKB-UniRule"/>
</dbReference>
<dbReference type="GO" id="GO:0004818">
    <property type="term" value="F:glutamate-tRNA ligase activity"/>
    <property type="evidence" value="ECO:0007669"/>
    <property type="project" value="UniProtKB-UniRule"/>
</dbReference>
<dbReference type="GO" id="GO:0000049">
    <property type="term" value="F:tRNA binding"/>
    <property type="evidence" value="ECO:0007669"/>
    <property type="project" value="InterPro"/>
</dbReference>
<dbReference type="GO" id="GO:0008270">
    <property type="term" value="F:zinc ion binding"/>
    <property type="evidence" value="ECO:0007669"/>
    <property type="project" value="InterPro"/>
</dbReference>
<dbReference type="GO" id="GO:0006424">
    <property type="term" value="P:glutamyl-tRNA aminoacylation"/>
    <property type="evidence" value="ECO:0007669"/>
    <property type="project" value="UniProtKB-UniRule"/>
</dbReference>
<dbReference type="CDD" id="cd00808">
    <property type="entry name" value="GluRS_core"/>
    <property type="match status" value="1"/>
</dbReference>
<dbReference type="FunFam" id="3.40.50.620:FF:000007">
    <property type="entry name" value="Glutamate--tRNA ligase"/>
    <property type="match status" value="1"/>
</dbReference>
<dbReference type="Gene3D" id="1.10.10.350">
    <property type="match status" value="1"/>
</dbReference>
<dbReference type="Gene3D" id="1.10.8.70">
    <property type="entry name" value="Glutamate-tRNA synthetase, class I, anticodon-binding domain 1"/>
    <property type="match status" value="1"/>
</dbReference>
<dbReference type="Gene3D" id="3.40.50.620">
    <property type="entry name" value="HUPs"/>
    <property type="match status" value="1"/>
</dbReference>
<dbReference type="HAMAP" id="MF_00022">
    <property type="entry name" value="Glu_tRNA_synth_type1"/>
    <property type="match status" value="1"/>
</dbReference>
<dbReference type="InterPro" id="IPR045462">
    <property type="entry name" value="aa-tRNA-synth_I_cd-bd"/>
</dbReference>
<dbReference type="InterPro" id="IPR020751">
    <property type="entry name" value="aa-tRNA-synth_I_codon-bd_sub2"/>
</dbReference>
<dbReference type="InterPro" id="IPR001412">
    <property type="entry name" value="aa-tRNA-synth_I_CS"/>
</dbReference>
<dbReference type="InterPro" id="IPR008925">
    <property type="entry name" value="aa_tRNA-synth_I_cd-bd_sf"/>
</dbReference>
<dbReference type="InterPro" id="IPR004527">
    <property type="entry name" value="Glu-tRNA-ligase_bac/mito"/>
</dbReference>
<dbReference type="InterPro" id="IPR020752">
    <property type="entry name" value="Glu-tRNA-synth_I_codon-bd_sub1"/>
</dbReference>
<dbReference type="InterPro" id="IPR000924">
    <property type="entry name" value="Glu/Gln-tRNA-synth"/>
</dbReference>
<dbReference type="InterPro" id="IPR020058">
    <property type="entry name" value="Glu/Gln-tRNA-synth_Ib_cat-dom"/>
</dbReference>
<dbReference type="InterPro" id="IPR049940">
    <property type="entry name" value="GluQ/Sye"/>
</dbReference>
<dbReference type="InterPro" id="IPR033910">
    <property type="entry name" value="GluRS_core"/>
</dbReference>
<dbReference type="InterPro" id="IPR014729">
    <property type="entry name" value="Rossmann-like_a/b/a_fold"/>
</dbReference>
<dbReference type="NCBIfam" id="TIGR00464">
    <property type="entry name" value="gltX_bact"/>
    <property type="match status" value="1"/>
</dbReference>
<dbReference type="PANTHER" id="PTHR43311">
    <property type="entry name" value="GLUTAMATE--TRNA LIGASE"/>
    <property type="match status" value="1"/>
</dbReference>
<dbReference type="PANTHER" id="PTHR43311:SF2">
    <property type="entry name" value="GLUTAMATE--TRNA LIGASE, MITOCHONDRIAL-RELATED"/>
    <property type="match status" value="1"/>
</dbReference>
<dbReference type="Pfam" id="PF19269">
    <property type="entry name" value="Anticodon_2"/>
    <property type="match status" value="1"/>
</dbReference>
<dbReference type="Pfam" id="PF00749">
    <property type="entry name" value="tRNA-synt_1c"/>
    <property type="match status" value="1"/>
</dbReference>
<dbReference type="PRINTS" id="PR00987">
    <property type="entry name" value="TRNASYNTHGLU"/>
</dbReference>
<dbReference type="SUPFAM" id="SSF48163">
    <property type="entry name" value="An anticodon-binding domain of class I aminoacyl-tRNA synthetases"/>
    <property type="match status" value="1"/>
</dbReference>
<dbReference type="SUPFAM" id="SSF52374">
    <property type="entry name" value="Nucleotidylyl transferase"/>
    <property type="match status" value="1"/>
</dbReference>
<dbReference type="PROSITE" id="PS00178">
    <property type="entry name" value="AA_TRNA_LIGASE_I"/>
    <property type="match status" value="1"/>
</dbReference>
<comment type="function">
    <text evidence="1">Catalyzes the attachment of glutamate to tRNA(Glu) in a two-step reaction: glutamate is first activated by ATP to form Glu-AMP and then transferred to the acceptor end of tRNA(Glu).</text>
</comment>
<comment type="catalytic activity">
    <reaction evidence="1">
        <text>tRNA(Glu) + L-glutamate + ATP = L-glutamyl-tRNA(Glu) + AMP + diphosphate</text>
        <dbReference type="Rhea" id="RHEA:23540"/>
        <dbReference type="Rhea" id="RHEA-COMP:9663"/>
        <dbReference type="Rhea" id="RHEA-COMP:9680"/>
        <dbReference type="ChEBI" id="CHEBI:29985"/>
        <dbReference type="ChEBI" id="CHEBI:30616"/>
        <dbReference type="ChEBI" id="CHEBI:33019"/>
        <dbReference type="ChEBI" id="CHEBI:78442"/>
        <dbReference type="ChEBI" id="CHEBI:78520"/>
        <dbReference type="ChEBI" id="CHEBI:456215"/>
        <dbReference type="EC" id="6.1.1.17"/>
    </reaction>
</comment>
<comment type="subunit">
    <text evidence="1">Monomer.</text>
</comment>
<comment type="subcellular location">
    <subcellularLocation>
        <location evidence="1">Cytoplasm</location>
    </subcellularLocation>
</comment>
<comment type="similarity">
    <text evidence="1">Belongs to the class-I aminoacyl-tRNA synthetase family. Glutamate--tRNA ligase type 1 subfamily.</text>
</comment>
<sequence length="469" mass="52139">MTTSVRTRFAPSPTGFIHLGNIRSALYPWAFARKMKGTFVLRIEDTDVERSTSESVDAILEGMAWLGLDFDEGPFYQMQRMDRYREVLKQMQDAGLVYPCYMSTEELDALRERQREAGEKPRYDGTWRPEPGKVLPEPPAGVQPVLRFRNPLTGVVAWDDAVKGRIEISNEELDDLVIARPDGTPTYNFCVVVDDLDMRITHVIRGDDHVNNTPRQINILRALGGEPPVYAHLPTVLNEQGEKMSKRHGAMSVVGYRDAGFLPEAVVNYLARLGWSHGDAEIFSREQFVEWFDLEHLGKSPAQYDHDKLAWLNAHYIKEADNARLAELAKPFFAELGIDEAALAQGADLAAVVGLLKDRASTVKEIAENAAMFYRTPAPDAESLAQHVTDVVRPALADLAAALKTVEWTKEAIAAALKATLGAHKLKMPQLAMPVRLLVAGTTHTPSIDSVLMLFGRDVVVGRIEKALV</sequence>
<organism>
    <name type="scientific">Paraburkholderia phytofirmans (strain DSM 17436 / LMG 22146 / PsJN)</name>
    <name type="common">Burkholderia phytofirmans</name>
    <dbReference type="NCBI Taxonomy" id="398527"/>
    <lineage>
        <taxon>Bacteria</taxon>
        <taxon>Pseudomonadati</taxon>
        <taxon>Pseudomonadota</taxon>
        <taxon>Betaproteobacteria</taxon>
        <taxon>Burkholderiales</taxon>
        <taxon>Burkholderiaceae</taxon>
        <taxon>Paraburkholderia</taxon>
    </lineage>
</organism>
<keyword id="KW-0030">Aminoacyl-tRNA synthetase</keyword>
<keyword id="KW-0067">ATP-binding</keyword>
<keyword id="KW-0963">Cytoplasm</keyword>
<keyword id="KW-0436">Ligase</keyword>
<keyword id="KW-0547">Nucleotide-binding</keyword>
<keyword id="KW-0648">Protein biosynthesis</keyword>
<evidence type="ECO:0000255" key="1">
    <source>
        <dbReference type="HAMAP-Rule" id="MF_00022"/>
    </source>
</evidence>
<evidence type="ECO:0000256" key="2">
    <source>
        <dbReference type="SAM" id="MobiDB-lite"/>
    </source>
</evidence>
<feature type="chain" id="PRO_1000090060" description="Glutamate--tRNA ligase">
    <location>
        <begin position="1"/>
        <end position="469"/>
    </location>
</feature>
<feature type="region of interest" description="Disordered" evidence="2">
    <location>
        <begin position="114"/>
        <end position="139"/>
    </location>
</feature>
<feature type="short sequence motif" description="'HIGH' region" evidence="1">
    <location>
        <begin position="11"/>
        <end position="21"/>
    </location>
</feature>
<feature type="short sequence motif" description="'KMSKS' region" evidence="1">
    <location>
        <begin position="243"/>
        <end position="247"/>
    </location>
</feature>
<feature type="compositionally biased region" description="Basic and acidic residues" evidence="2">
    <location>
        <begin position="114"/>
        <end position="131"/>
    </location>
</feature>
<feature type="binding site" evidence="1">
    <location>
        <position position="246"/>
    </location>
    <ligand>
        <name>ATP</name>
        <dbReference type="ChEBI" id="CHEBI:30616"/>
    </ligand>
</feature>
<protein>
    <recommendedName>
        <fullName evidence="1">Glutamate--tRNA ligase</fullName>
        <ecNumber evidence="1">6.1.1.17</ecNumber>
    </recommendedName>
    <alternativeName>
        <fullName evidence="1">Glutamyl-tRNA synthetase</fullName>
        <shortName evidence="1">GluRS</shortName>
    </alternativeName>
</protein>
<proteinExistence type="inferred from homology"/>
<gene>
    <name evidence="1" type="primary">gltX</name>
    <name type="ordered locus">Bphyt_2495</name>
</gene>
<reference key="1">
    <citation type="journal article" date="2011" name="J. Bacteriol.">
        <title>Complete genome sequence of the plant growth-promoting endophyte Burkholderia phytofirmans strain PsJN.</title>
        <authorList>
            <person name="Weilharter A."/>
            <person name="Mitter B."/>
            <person name="Shin M.V."/>
            <person name="Chain P.S."/>
            <person name="Nowak J."/>
            <person name="Sessitsch A."/>
        </authorList>
    </citation>
    <scope>NUCLEOTIDE SEQUENCE [LARGE SCALE GENOMIC DNA]</scope>
    <source>
        <strain>DSM 17436 / LMG 22146 / PsJN</strain>
    </source>
</reference>
<accession>B2SXN5</accession>